<feature type="chain" id="PRO_0000387420" description="tRNA1(Val) (adenine(37)-N6)-methyltransferase">
    <location>
        <begin position="1"/>
        <end position="251"/>
    </location>
</feature>
<protein>
    <recommendedName>
        <fullName evidence="1">tRNA1(Val) (adenine(37)-N6)-methyltransferase</fullName>
        <ecNumber evidence="1">2.1.1.223</ecNumber>
    </recommendedName>
    <alternativeName>
        <fullName evidence="1">tRNA m6A37 methyltransferase</fullName>
    </alternativeName>
</protein>
<reference key="1">
    <citation type="submission" date="2006-08" db="EMBL/GenBank/DDBJ databases">
        <title>Complete sequence of Shewanella frigidimarina NCIMB 400.</title>
        <authorList>
            <consortium name="US DOE Joint Genome Institute"/>
            <person name="Copeland A."/>
            <person name="Lucas S."/>
            <person name="Lapidus A."/>
            <person name="Barry K."/>
            <person name="Detter J.C."/>
            <person name="Glavina del Rio T."/>
            <person name="Hammon N."/>
            <person name="Israni S."/>
            <person name="Dalin E."/>
            <person name="Tice H."/>
            <person name="Pitluck S."/>
            <person name="Fredrickson J.K."/>
            <person name="Kolker E."/>
            <person name="McCuel L.A."/>
            <person name="DiChristina T."/>
            <person name="Nealson K.H."/>
            <person name="Newman D."/>
            <person name="Tiedje J.M."/>
            <person name="Zhou J."/>
            <person name="Romine M.F."/>
            <person name="Culley D.E."/>
            <person name="Serres M."/>
            <person name="Chertkov O."/>
            <person name="Brettin T."/>
            <person name="Bruce D."/>
            <person name="Han C."/>
            <person name="Tapia R."/>
            <person name="Gilna P."/>
            <person name="Schmutz J."/>
            <person name="Larimer F."/>
            <person name="Land M."/>
            <person name="Hauser L."/>
            <person name="Kyrpides N."/>
            <person name="Mikhailova N."/>
            <person name="Richardson P."/>
        </authorList>
    </citation>
    <scope>NUCLEOTIDE SEQUENCE [LARGE SCALE GENOMIC DNA]</scope>
    <source>
        <strain>NCIMB 400</strain>
    </source>
</reference>
<accession>Q087P4</accession>
<dbReference type="EC" id="2.1.1.223" evidence="1"/>
<dbReference type="EMBL" id="CP000447">
    <property type="protein sequence ID" value="ABI70521.1"/>
    <property type="molecule type" value="Genomic_DNA"/>
</dbReference>
<dbReference type="RefSeq" id="WP_011636148.1">
    <property type="nucleotide sequence ID" value="NC_008345.1"/>
</dbReference>
<dbReference type="SMR" id="Q087P4"/>
<dbReference type="STRING" id="318167.Sfri_0661"/>
<dbReference type="KEGG" id="sfr:Sfri_0661"/>
<dbReference type="eggNOG" id="COG4123">
    <property type="taxonomic scope" value="Bacteria"/>
</dbReference>
<dbReference type="HOGENOM" id="CLU_061983_0_0_6"/>
<dbReference type="OrthoDB" id="5383291at2"/>
<dbReference type="Proteomes" id="UP000000684">
    <property type="component" value="Chromosome"/>
</dbReference>
<dbReference type="GO" id="GO:0005737">
    <property type="term" value="C:cytoplasm"/>
    <property type="evidence" value="ECO:0007669"/>
    <property type="project" value="UniProtKB-SubCell"/>
</dbReference>
<dbReference type="GO" id="GO:0003676">
    <property type="term" value="F:nucleic acid binding"/>
    <property type="evidence" value="ECO:0007669"/>
    <property type="project" value="InterPro"/>
</dbReference>
<dbReference type="GO" id="GO:0000179">
    <property type="term" value="F:rRNA (adenine-N6,N6-)-dimethyltransferase activity"/>
    <property type="evidence" value="ECO:0007669"/>
    <property type="project" value="InterPro"/>
</dbReference>
<dbReference type="GO" id="GO:0016430">
    <property type="term" value="F:tRNA (adenine-N6)-methyltransferase activity"/>
    <property type="evidence" value="ECO:0007669"/>
    <property type="project" value="UniProtKB-UniRule"/>
</dbReference>
<dbReference type="GO" id="GO:0008033">
    <property type="term" value="P:tRNA processing"/>
    <property type="evidence" value="ECO:0007669"/>
    <property type="project" value="UniProtKB-UniRule"/>
</dbReference>
<dbReference type="CDD" id="cd02440">
    <property type="entry name" value="AdoMet_MTases"/>
    <property type="match status" value="1"/>
</dbReference>
<dbReference type="Gene3D" id="3.40.50.150">
    <property type="entry name" value="Vaccinia Virus protein VP39"/>
    <property type="match status" value="1"/>
</dbReference>
<dbReference type="HAMAP" id="MF_01872">
    <property type="entry name" value="tRNA_methyltr_YfiC"/>
    <property type="match status" value="1"/>
</dbReference>
<dbReference type="InterPro" id="IPR002052">
    <property type="entry name" value="DNA_methylase_N6_adenine_CS"/>
</dbReference>
<dbReference type="InterPro" id="IPR020596">
    <property type="entry name" value="rRNA_Ade_Mease_Trfase_CS"/>
</dbReference>
<dbReference type="InterPro" id="IPR029063">
    <property type="entry name" value="SAM-dependent_MTases_sf"/>
</dbReference>
<dbReference type="InterPro" id="IPR007848">
    <property type="entry name" value="Small_mtfrase_dom"/>
</dbReference>
<dbReference type="InterPro" id="IPR050210">
    <property type="entry name" value="tRNA_Adenine-N(6)_MTase"/>
</dbReference>
<dbReference type="InterPro" id="IPR022882">
    <property type="entry name" value="tRNA_adenine-N6_MeTrfase"/>
</dbReference>
<dbReference type="PANTHER" id="PTHR47739">
    <property type="entry name" value="TRNA1(VAL) (ADENINE(37)-N6)-METHYLTRANSFERASE"/>
    <property type="match status" value="1"/>
</dbReference>
<dbReference type="PANTHER" id="PTHR47739:SF1">
    <property type="entry name" value="TRNA1(VAL) (ADENINE(37)-N6)-METHYLTRANSFERASE"/>
    <property type="match status" value="1"/>
</dbReference>
<dbReference type="Pfam" id="PF05175">
    <property type="entry name" value="MTS"/>
    <property type="match status" value="1"/>
</dbReference>
<dbReference type="SUPFAM" id="SSF53335">
    <property type="entry name" value="S-adenosyl-L-methionine-dependent methyltransferases"/>
    <property type="match status" value="1"/>
</dbReference>
<dbReference type="PROSITE" id="PS00092">
    <property type="entry name" value="N6_MTASE"/>
    <property type="match status" value="1"/>
</dbReference>
<sequence>MSFTFKQFHIDDQQCGMAVSTDAVLLGAWAELTQSSHILDIGAGSGLLSLMAAQRSPHHTSIIAVEIDNAAAKACQFNIKQSPWSETVQLFHGAIQDFQQRHNNNDEPLFDHIICNPPYFEQGTQAKNSARADARHTNTLSFAELQNVISQLLAPQGTASVILPLQSLASFIQQLNAYGLFVAKQLDIISIEGKVANRSILAIQHNPTTAEPQTLTNPAVETQYHQMTIRDKQGRYSETMIDLCRPFYLKL</sequence>
<keyword id="KW-0963">Cytoplasm</keyword>
<keyword id="KW-0489">Methyltransferase</keyword>
<keyword id="KW-1185">Reference proteome</keyword>
<keyword id="KW-0949">S-adenosyl-L-methionine</keyword>
<keyword id="KW-0808">Transferase</keyword>
<keyword id="KW-0819">tRNA processing</keyword>
<proteinExistence type="inferred from homology"/>
<evidence type="ECO:0000255" key="1">
    <source>
        <dbReference type="HAMAP-Rule" id="MF_01872"/>
    </source>
</evidence>
<comment type="function">
    <text evidence="1">Specifically methylates the adenine in position 37 of tRNA(1)(Val) (anticodon cmo5UAC).</text>
</comment>
<comment type="catalytic activity">
    <reaction evidence="1">
        <text>adenosine(37) in tRNA1(Val) + S-adenosyl-L-methionine = N(6)-methyladenosine(37) in tRNA1(Val) + S-adenosyl-L-homocysteine + H(+)</text>
        <dbReference type="Rhea" id="RHEA:43160"/>
        <dbReference type="Rhea" id="RHEA-COMP:10369"/>
        <dbReference type="Rhea" id="RHEA-COMP:10370"/>
        <dbReference type="ChEBI" id="CHEBI:15378"/>
        <dbReference type="ChEBI" id="CHEBI:57856"/>
        <dbReference type="ChEBI" id="CHEBI:59789"/>
        <dbReference type="ChEBI" id="CHEBI:74411"/>
        <dbReference type="ChEBI" id="CHEBI:74449"/>
        <dbReference type="EC" id="2.1.1.223"/>
    </reaction>
</comment>
<comment type="subcellular location">
    <subcellularLocation>
        <location evidence="1">Cytoplasm</location>
    </subcellularLocation>
</comment>
<comment type="similarity">
    <text evidence="1">Belongs to the methyltransferase superfamily. tRNA (adenine-N(6)-)-methyltransferase family.</text>
</comment>
<gene>
    <name type="ordered locus">Sfri_0661</name>
</gene>
<organism>
    <name type="scientific">Shewanella frigidimarina (strain NCIMB 400)</name>
    <dbReference type="NCBI Taxonomy" id="318167"/>
    <lineage>
        <taxon>Bacteria</taxon>
        <taxon>Pseudomonadati</taxon>
        <taxon>Pseudomonadota</taxon>
        <taxon>Gammaproteobacteria</taxon>
        <taxon>Alteromonadales</taxon>
        <taxon>Shewanellaceae</taxon>
        <taxon>Shewanella</taxon>
    </lineage>
</organism>
<name>TRMN6_SHEFN</name>